<comment type="function">
    <text evidence="1">Binds to the 23S rRNA.</text>
</comment>
<comment type="subunit">
    <text evidence="1">Part of the 50S ribosomal subunit.</text>
</comment>
<comment type="similarity">
    <text evidence="1">Belongs to the universal ribosomal protein uL15 family.</text>
</comment>
<dbReference type="EMBL" id="CP000316">
    <property type="protein sequence ID" value="ABE42458.1"/>
    <property type="molecule type" value="Genomic_DNA"/>
</dbReference>
<dbReference type="RefSeq" id="WP_011481463.1">
    <property type="nucleotide sequence ID" value="NC_007948.1"/>
</dbReference>
<dbReference type="SMR" id="Q12G84"/>
<dbReference type="STRING" id="296591.Bpro_0494"/>
<dbReference type="KEGG" id="pol:Bpro_0494"/>
<dbReference type="eggNOG" id="COG0200">
    <property type="taxonomic scope" value="Bacteria"/>
</dbReference>
<dbReference type="HOGENOM" id="CLU_055188_4_2_4"/>
<dbReference type="OrthoDB" id="9810293at2"/>
<dbReference type="Proteomes" id="UP000001983">
    <property type="component" value="Chromosome"/>
</dbReference>
<dbReference type="GO" id="GO:0022625">
    <property type="term" value="C:cytosolic large ribosomal subunit"/>
    <property type="evidence" value="ECO:0007669"/>
    <property type="project" value="TreeGrafter"/>
</dbReference>
<dbReference type="GO" id="GO:0019843">
    <property type="term" value="F:rRNA binding"/>
    <property type="evidence" value="ECO:0007669"/>
    <property type="project" value="UniProtKB-UniRule"/>
</dbReference>
<dbReference type="GO" id="GO:0003735">
    <property type="term" value="F:structural constituent of ribosome"/>
    <property type="evidence" value="ECO:0007669"/>
    <property type="project" value="InterPro"/>
</dbReference>
<dbReference type="GO" id="GO:0006412">
    <property type="term" value="P:translation"/>
    <property type="evidence" value="ECO:0007669"/>
    <property type="project" value="UniProtKB-UniRule"/>
</dbReference>
<dbReference type="Gene3D" id="3.100.10.10">
    <property type="match status" value="1"/>
</dbReference>
<dbReference type="HAMAP" id="MF_01341">
    <property type="entry name" value="Ribosomal_uL15"/>
    <property type="match status" value="1"/>
</dbReference>
<dbReference type="InterPro" id="IPR030878">
    <property type="entry name" value="Ribosomal_uL15"/>
</dbReference>
<dbReference type="InterPro" id="IPR021131">
    <property type="entry name" value="Ribosomal_uL15/eL18"/>
</dbReference>
<dbReference type="InterPro" id="IPR036227">
    <property type="entry name" value="Ribosomal_uL15/eL18_sf"/>
</dbReference>
<dbReference type="InterPro" id="IPR005749">
    <property type="entry name" value="Ribosomal_uL15_bac-type"/>
</dbReference>
<dbReference type="NCBIfam" id="TIGR01071">
    <property type="entry name" value="rplO_bact"/>
    <property type="match status" value="1"/>
</dbReference>
<dbReference type="PANTHER" id="PTHR12934">
    <property type="entry name" value="50S RIBOSOMAL PROTEIN L15"/>
    <property type="match status" value="1"/>
</dbReference>
<dbReference type="PANTHER" id="PTHR12934:SF11">
    <property type="entry name" value="LARGE RIBOSOMAL SUBUNIT PROTEIN UL15M"/>
    <property type="match status" value="1"/>
</dbReference>
<dbReference type="Pfam" id="PF00828">
    <property type="entry name" value="Ribosomal_L27A"/>
    <property type="match status" value="1"/>
</dbReference>
<dbReference type="SUPFAM" id="SSF52080">
    <property type="entry name" value="Ribosomal proteins L15p and L18e"/>
    <property type="match status" value="1"/>
</dbReference>
<organism>
    <name type="scientific">Polaromonas sp. (strain JS666 / ATCC BAA-500)</name>
    <dbReference type="NCBI Taxonomy" id="296591"/>
    <lineage>
        <taxon>Bacteria</taxon>
        <taxon>Pseudomonadati</taxon>
        <taxon>Pseudomonadota</taxon>
        <taxon>Betaproteobacteria</taxon>
        <taxon>Burkholderiales</taxon>
        <taxon>Comamonadaceae</taxon>
        <taxon>Polaromonas</taxon>
    </lineage>
</organism>
<sequence length="143" mass="14732">MELNGIKPSLGAKHAKRRVGRGIGSGLGKTAGRGHKGQKSRAGGYHKVGFEGGQMPMQRRLPKRGFKSHLLKFNAEVTLSALEQLGLAEVDLLALKTAGLVGQLAKNVKVIKSGELSKAVKLNGISATAGAKAIIEAAGGSVA</sequence>
<gene>
    <name evidence="1" type="primary">rplO</name>
    <name type="ordered locus">Bpro_0494</name>
</gene>
<name>RL15_POLSJ</name>
<feature type="chain" id="PRO_1000054511" description="Large ribosomal subunit protein uL15">
    <location>
        <begin position="1"/>
        <end position="143"/>
    </location>
</feature>
<feature type="region of interest" description="Disordered" evidence="2">
    <location>
        <begin position="1"/>
        <end position="59"/>
    </location>
</feature>
<feature type="compositionally biased region" description="Gly residues" evidence="2">
    <location>
        <begin position="21"/>
        <end position="31"/>
    </location>
</feature>
<protein>
    <recommendedName>
        <fullName evidence="1">Large ribosomal subunit protein uL15</fullName>
    </recommendedName>
    <alternativeName>
        <fullName evidence="3">50S ribosomal protein L15</fullName>
    </alternativeName>
</protein>
<accession>Q12G84</accession>
<proteinExistence type="inferred from homology"/>
<keyword id="KW-1185">Reference proteome</keyword>
<keyword id="KW-0687">Ribonucleoprotein</keyword>
<keyword id="KW-0689">Ribosomal protein</keyword>
<keyword id="KW-0694">RNA-binding</keyword>
<keyword id="KW-0699">rRNA-binding</keyword>
<evidence type="ECO:0000255" key="1">
    <source>
        <dbReference type="HAMAP-Rule" id="MF_01341"/>
    </source>
</evidence>
<evidence type="ECO:0000256" key="2">
    <source>
        <dbReference type="SAM" id="MobiDB-lite"/>
    </source>
</evidence>
<evidence type="ECO:0000305" key="3"/>
<reference key="1">
    <citation type="journal article" date="2008" name="Appl. Environ. Microbiol.">
        <title>The genome of Polaromonas sp. strain JS666: insights into the evolution of a hydrocarbon- and xenobiotic-degrading bacterium, and features of relevance to biotechnology.</title>
        <authorList>
            <person name="Mattes T.E."/>
            <person name="Alexander A.K."/>
            <person name="Richardson P.M."/>
            <person name="Munk A.C."/>
            <person name="Han C.S."/>
            <person name="Stothard P."/>
            <person name="Coleman N.V."/>
        </authorList>
    </citation>
    <scope>NUCLEOTIDE SEQUENCE [LARGE SCALE GENOMIC DNA]</scope>
    <source>
        <strain>JS666 / ATCC BAA-500</strain>
    </source>
</reference>